<proteinExistence type="evidence at transcript level"/>
<organism>
    <name type="scientific">Cyanophora paradoxa</name>
    <dbReference type="NCBI Taxonomy" id="2762"/>
    <lineage>
        <taxon>Eukaryota</taxon>
        <taxon>Glaucocystophyceae</taxon>
        <taxon>Cyanophoraceae</taxon>
        <taxon>Cyanophora</taxon>
    </lineage>
</organism>
<sequence>MSAFACSAVAAPARGAIKANSSSVCAIENGKAVAVGTSKQVGAFKPVFAAAKAAKATTFSISCSAASDEVPDMGKRKLMNLLLLGAIAGPTIGAGGPFVSFLVPPKSGGGAGAGQAAKDAAGNDIKVEKWLETXKPGDRSLAQGLKGDATYLIVKEDGTLEKYGLNAVCTHLGCVVPWNQSEGKFMCPCHGSQYDRTGKVVRGPAPLSLALAHVNVLEDGVVAFEPWTETDFRTNTAPWWK</sequence>
<evidence type="ECO:0000250" key="1"/>
<evidence type="ECO:0000255" key="2"/>
<evidence type="ECO:0000255" key="3">
    <source>
        <dbReference type="HAMAP-Rule" id="MF_01335"/>
    </source>
</evidence>
<comment type="function">
    <text evidence="1">Component of the cytochrome b6-f complex, which mediates electron transfer between photosystem II (PSII) and photosystem I (PSI), cyclic electron flow around PSI, and state transitions.</text>
</comment>
<comment type="catalytic activity">
    <reaction>
        <text>2 oxidized [plastocyanin] + a plastoquinol + 2 H(+)(in) = 2 reduced [plastocyanin] + a plastoquinone + 4 H(+)(out)</text>
        <dbReference type="Rhea" id="RHEA:22148"/>
        <dbReference type="Rhea" id="RHEA-COMP:9561"/>
        <dbReference type="Rhea" id="RHEA-COMP:9562"/>
        <dbReference type="Rhea" id="RHEA-COMP:10039"/>
        <dbReference type="Rhea" id="RHEA-COMP:10040"/>
        <dbReference type="ChEBI" id="CHEBI:15378"/>
        <dbReference type="ChEBI" id="CHEBI:17757"/>
        <dbReference type="ChEBI" id="CHEBI:29036"/>
        <dbReference type="ChEBI" id="CHEBI:49552"/>
        <dbReference type="ChEBI" id="CHEBI:62192"/>
        <dbReference type="EC" id="7.1.1.6"/>
    </reaction>
</comment>
<comment type="cofactor">
    <cofactor evidence="1">
        <name>[2Fe-2S] cluster</name>
        <dbReference type="ChEBI" id="CHEBI:190135"/>
    </cofactor>
    <text evidence="1">Binds 1 [2Fe-2S] cluster per subunit.</text>
</comment>
<comment type="subunit">
    <text evidence="1">The 4 large subunits of the cytochrome b6-f complex are cytochrome b6, subunit IV (17 kDa polypeptide, petD), cytochrome f and the Rieske protein, while the 4 small subunits are petG, petL, petM and petN. The complex functions as a dimer (By similarity).</text>
</comment>
<comment type="subcellular location">
    <subcellularLocation>
        <location evidence="1">Plastid</location>
        <location evidence="1">Cyanelle thylakoid membrane</location>
        <topology evidence="1">Single-pass membrane protein</topology>
    </subcellularLocation>
    <text evidence="1">The transmembrane helix obliquely spans the membrane in one monomer, and its extrinsic C-terminal domain is part of the other monomer.</text>
</comment>
<comment type="miscellaneous">
    <text>This protein is 1 of 2 subunits of the cytochrome b6-f complex that are encoded in the nucleus.</text>
</comment>
<comment type="miscellaneous">
    <text>The Rieske iron-sulfur protein is a high potential 2Fe-2S protein.</text>
</comment>
<comment type="similarity">
    <text evidence="3">Belongs to the Rieske iron-sulfur protein family.</text>
</comment>
<keyword id="KW-0001">2Fe-2S</keyword>
<keyword id="KW-0194">Cyanelle</keyword>
<keyword id="KW-1015">Disulfide bond</keyword>
<keyword id="KW-0249">Electron transport</keyword>
<keyword id="KW-0408">Iron</keyword>
<keyword id="KW-0411">Iron-sulfur</keyword>
<keyword id="KW-0472">Membrane</keyword>
<keyword id="KW-0479">Metal-binding</keyword>
<keyword id="KW-0934">Plastid</keyword>
<keyword id="KW-0793">Thylakoid</keyword>
<keyword id="KW-0809">Transit peptide</keyword>
<keyword id="KW-1278">Translocase</keyword>
<keyword id="KW-0812">Transmembrane</keyword>
<keyword id="KW-1133">Transmembrane helix</keyword>
<keyword id="KW-0813">Transport</keyword>
<gene>
    <name type="primary">petC-2</name>
</gene>
<accession>Q5CC92</accession>
<reference key="1">
    <citation type="journal article" date="2005" name="FEBS J.">
        <title>Conservative sorting in a primitive plastid. The cyanelle of Cyanophora paradoxa.</title>
        <authorList>
            <person name="Steiner J.M."/>
            <person name="Berghoefer J."/>
            <person name="Yusa F."/>
            <person name="Pompe J.A."/>
            <person name="Kloesgen R.B."/>
            <person name="Loeffelhardt W."/>
        </authorList>
    </citation>
    <scope>NUCLEOTIDE SEQUENCE [MRNA]</scope>
    <scope>PROTEIN IMPORT INTO ISOLATED CYANELLES</scope>
    <source>
        <strain>UTEX LB 555 / Pringsheim</strain>
    </source>
</reference>
<protein>
    <recommendedName>
        <fullName>Cytochrome b6-f complex iron-sulfur subunit 2, cyanelle</fullName>
        <ecNumber>7.1.1.6</ecNumber>
    </recommendedName>
    <alternativeName>
        <fullName>Plastohydroquinone:plastocyanin oxidoreductase iron-sulfur protein 2</fullName>
    </alternativeName>
    <alternativeName>
        <fullName>Rieske iron-sulfur protein 2</fullName>
        <shortName>ISP 2</shortName>
        <shortName>RISP 2</shortName>
    </alternativeName>
</protein>
<dbReference type="EC" id="7.1.1.6"/>
<dbReference type="EMBL" id="AJ784853">
    <property type="protein sequence ID" value="CAH04961.1"/>
    <property type="molecule type" value="mRNA"/>
</dbReference>
<dbReference type="GO" id="GO:0033115">
    <property type="term" value="C:cyanelle thylakoid membrane"/>
    <property type="evidence" value="ECO:0007669"/>
    <property type="project" value="UniProtKB-SubCell"/>
</dbReference>
<dbReference type="GO" id="GO:0051537">
    <property type="term" value="F:2 iron, 2 sulfur cluster binding"/>
    <property type="evidence" value="ECO:0007669"/>
    <property type="project" value="UniProtKB-KW"/>
</dbReference>
<dbReference type="GO" id="GO:0045158">
    <property type="term" value="F:electron transporter, transferring electrons within cytochrome b6/f complex of photosystem II activity"/>
    <property type="evidence" value="ECO:0007669"/>
    <property type="project" value="InterPro"/>
</dbReference>
<dbReference type="GO" id="GO:0046872">
    <property type="term" value="F:metal ion binding"/>
    <property type="evidence" value="ECO:0007669"/>
    <property type="project" value="UniProtKB-KW"/>
</dbReference>
<dbReference type="GO" id="GO:0009496">
    <property type="term" value="F:plastoquinol--plastocyanin reductase activity"/>
    <property type="evidence" value="ECO:0007669"/>
    <property type="project" value="UniProtKB-EC"/>
</dbReference>
<dbReference type="CDD" id="cd03471">
    <property type="entry name" value="Rieske_cytochrome_b6f"/>
    <property type="match status" value="1"/>
</dbReference>
<dbReference type="FunFam" id="2.102.10.10:FF:000007">
    <property type="entry name" value="Cytochrome b6-f complex iron-sulfur subunit"/>
    <property type="match status" value="1"/>
</dbReference>
<dbReference type="Gene3D" id="2.102.10.10">
    <property type="entry name" value="Rieske [2Fe-2S] iron-sulphur domain"/>
    <property type="match status" value="1"/>
</dbReference>
<dbReference type="Gene3D" id="1.20.5.700">
    <property type="entry name" value="Single helix bin"/>
    <property type="match status" value="1"/>
</dbReference>
<dbReference type="HAMAP" id="MF_01335">
    <property type="entry name" value="Cytb6_f_Rieske"/>
    <property type="match status" value="1"/>
</dbReference>
<dbReference type="InterPro" id="IPR023960">
    <property type="entry name" value="Cyt_b6_f_Rieske"/>
</dbReference>
<dbReference type="InterPro" id="IPR017941">
    <property type="entry name" value="Rieske_2Fe-2S"/>
</dbReference>
<dbReference type="InterPro" id="IPR036922">
    <property type="entry name" value="Rieske_2Fe-2S_sf"/>
</dbReference>
<dbReference type="InterPro" id="IPR014349">
    <property type="entry name" value="Rieske_Fe-S_prot"/>
</dbReference>
<dbReference type="InterPro" id="IPR005805">
    <property type="entry name" value="Rieske_Fe-S_prot_C"/>
</dbReference>
<dbReference type="NCBIfam" id="NF045928">
    <property type="entry name" value="Cytb6fFeSPetC"/>
    <property type="match status" value="1"/>
</dbReference>
<dbReference type="NCBIfam" id="NF010001">
    <property type="entry name" value="PRK13474.1"/>
    <property type="match status" value="1"/>
</dbReference>
<dbReference type="PANTHER" id="PTHR10134">
    <property type="entry name" value="CYTOCHROME B-C1 COMPLEX SUBUNIT RIESKE, MITOCHONDRIAL"/>
    <property type="match status" value="1"/>
</dbReference>
<dbReference type="Pfam" id="PF00355">
    <property type="entry name" value="Rieske"/>
    <property type="match status" value="1"/>
</dbReference>
<dbReference type="Pfam" id="PF25471">
    <property type="entry name" value="TM_PetC"/>
    <property type="match status" value="1"/>
</dbReference>
<dbReference type="PRINTS" id="PR00162">
    <property type="entry name" value="RIESKE"/>
</dbReference>
<dbReference type="SUPFAM" id="SSF50022">
    <property type="entry name" value="ISP domain"/>
    <property type="match status" value="1"/>
</dbReference>
<dbReference type="PROSITE" id="PS51296">
    <property type="entry name" value="RIESKE"/>
    <property type="match status" value="1"/>
</dbReference>
<feature type="transit peptide" description="Cyanelle" evidence="2">
    <location>
        <begin position="1"/>
        <end position="62"/>
    </location>
</feature>
<feature type="chain" id="PRO_0000030688" description="Cytochrome b6-f complex iron-sulfur subunit 2, cyanelle">
    <location>
        <begin position="63"/>
        <end position="241"/>
    </location>
</feature>
<feature type="transmembrane region" description="Helical" evidence="2">
    <location>
        <begin position="83"/>
        <end position="103"/>
    </location>
</feature>
<feature type="domain" description="Rieske">
    <location>
        <begin position="127"/>
        <end position="223"/>
    </location>
</feature>
<feature type="binding site" evidence="1">
    <location>
        <position position="169"/>
    </location>
    <ligand>
        <name>[2Fe-2S] cluster</name>
        <dbReference type="ChEBI" id="CHEBI:190135"/>
    </ligand>
</feature>
<feature type="binding site" evidence="1">
    <location>
        <position position="171"/>
    </location>
    <ligand>
        <name>[2Fe-2S] cluster</name>
        <dbReference type="ChEBI" id="CHEBI:190135"/>
    </ligand>
</feature>
<feature type="binding site" evidence="1">
    <location>
        <position position="187"/>
    </location>
    <ligand>
        <name>[2Fe-2S] cluster</name>
        <dbReference type="ChEBI" id="CHEBI:190135"/>
    </ligand>
</feature>
<feature type="binding site" evidence="1">
    <location>
        <position position="190"/>
    </location>
    <ligand>
        <name>[2Fe-2S] cluster</name>
        <dbReference type="ChEBI" id="CHEBI:190135"/>
    </ligand>
</feature>
<feature type="disulfide bond" evidence="1">
    <location>
        <begin position="174"/>
        <end position="189"/>
    </location>
</feature>
<name>UCRIB_CYAPA</name>